<proteinExistence type="evidence at protein level"/>
<protein>
    <recommendedName>
        <fullName evidence="1">Heat-inducible transcription repressor HrcA</fullName>
    </recommendedName>
</protein>
<dbReference type="EMBL" id="AL123456">
    <property type="protein sequence ID" value="CCP45162.1"/>
    <property type="molecule type" value="Genomic_DNA"/>
</dbReference>
<dbReference type="PIR" id="E70587">
    <property type="entry name" value="E70587"/>
</dbReference>
<dbReference type="RefSeq" id="NP_216890.1">
    <property type="nucleotide sequence ID" value="NC_000962.3"/>
</dbReference>
<dbReference type="RefSeq" id="WP_003412252.1">
    <property type="nucleotide sequence ID" value="NZ_NVQJ01000029.1"/>
</dbReference>
<dbReference type="SMR" id="P9WMK3"/>
<dbReference type="IntAct" id="P9WMK3">
    <property type="interactions" value="1"/>
</dbReference>
<dbReference type="MINT" id="P9WMK3"/>
<dbReference type="STRING" id="83332.Rv2374c"/>
<dbReference type="PaxDb" id="83332-Rv2374c"/>
<dbReference type="GeneID" id="45426359"/>
<dbReference type="GeneID" id="885924"/>
<dbReference type="KEGG" id="mtu:Rv2374c"/>
<dbReference type="KEGG" id="mtv:RVBD_2374c"/>
<dbReference type="TubercuList" id="Rv2374c"/>
<dbReference type="eggNOG" id="COG1420">
    <property type="taxonomic scope" value="Bacteria"/>
</dbReference>
<dbReference type="InParanoid" id="P9WMK3"/>
<dbReference type="OrthoDB" id="9783139at2"/>
<dbReference type="PhylomeDB" id="P9WMK3"/>
<dbReference type="Proteomes" id="UP000001584">
    <property type="component" value="Chromosome"/>
</dbReference>
<dbReference type="GO" id="GO:0005886">
    <property type="term" value="C:plasma membrane"/>
    <property type="evidence" value="ECO:0007005"/>
    <property type="project" value="MTBBASE"/>
</dbReference>
<dbReference type="GO" id="GO:0003677">
    <property type="term" value="F:DNA binding"/>
    <property type="evidence" value="ECO:0007669"/>
    <property type="project" value="InterPro"/>
</dbReference>
<dbReference type="GO" id="GO:0045892">
    <property type="term" value="P:negative regulation of DNA-templated transcription"/>
    <property type="evidence" value="ECO:0000314"/>
    <property type="project" value="MTBBASE"/>
</dbReference>
<dbReference type="FunFam" id="1.10.10.10:FF:000049">
    <property type="entry name" value="Heat-inducible transcription repressor HrcA"/>
    <property type="match status" value="1"/>
</dbReference>
<dbReference type="FunFam" id="3.30.390.60:FF:000003">
    <property type="entry name" value="Heat-inducible transcription repressor HrcA"/>
    <property type="match status" value="1"/>
</dbReference>
<dbReference type="Gene3D" id="3.30.450.40">
    <property type="match status" value="1"/>
</dbReference>
<dbReference type="Gene3D" id="3.30.390.60">
    <property type="entry name" value="Heat-inducible transcription repressor hrca homolog, domain 3"/>
    <property type="match status" value="1"/>
</dbReference>
<dbReference type="Gene3D" id="1.10.10.10">
    <property type="entry name" value="Winged helix-like DNA-binding domain superfamily/Winged helix DNA-binding domain"/>
    <property type="match status" value="1"/>
</dbReference>
<dbReference type="HAMAP" id="MF_00081">
    <property type="entry name" value="HrcA"/>
    <property type="match status" value="1"/>
</dbReference>
<dbReference type="InterPro" id="IPR029016">
    <property type="entry name" value="GAF-like_dom_sf"/>
</dbReference>
<dbReference type="InterPro" id="IPR002571">
    <property type="entry name" value="HrcA"/>
</dbReference>
<dbReference type="InterPro" id="IPR021153">
    <property type="entry name" value="HrcA_C"/>
</dbReference>
<dbReference type="InterPro" id="IPR036388">
    <property type="entry name" value="WH-like_DNA-bd_sf"/>
</dbReference>
<dbReference type="InterPro" id="IPR036390">
    <property type="entry name" value="WH_DNA-bd_sf"/>
</dbReference>
<dbReference type="InterPro" id="IPR023120">
    <property type="entry name" value="WHTH_transcript_rep_HrcA_IDD"/>
</dbReference>
<dbReference type="NCBIfam" id="TIGR00331">
    <property type="entry name" value="hrcA"/>
    <property type="match status" value="1"/>
</dbReference>
<dbReference type="PANTHER" id="PTHR34824">
    <property type="entry name" value="HEAT-INDUCIBLE TRANSCRIPTION REPRESSOR HRCA"/>
    <property type="match status" value="1"/>
</dbReference>
<dbReference type="PANTHER" id="PTHR34824:SF1">
    <property type="entry name" value="HEAT-INDUCIBLE TRANSCRIPTION REPRESSOR HRCA"/>
    <property type="match status" value="1"/>
</dbReference>
<dbReference type="Pfam" id="PF01628">
    <property type="entry name" value="HrcA"/>
    <property type="match status" value="1"/>
</dbReference>
<dbReference type="PIRSF" id="PIRSF005485">
    <property type="entry name" value="HrcA"/>
    <property type="match status" value="1"/>
</dbReference>
<dbReference type="SUPFAM" id="SSF55781">
    <property type="entry name" value="GAF domain-like"/>
    <property type="match status" value="1"/>
</dbReference>
<dbReference type="SUPFAM" id="SSF46785">
    <property type="entry name" value="Winged helix' DNA-binding domain"/>
    <property type="match status" value="1"/>
</dbReference>
<keyword id="KW-1185">Reference proteome</keyword>
<keyword id="KW-0678">Repressor</keyword>
<keyword id="KW-0346">Stress response</keyword>
<keyword id="KW-0804">Transcription</keyword>
<keyword id="KW-0805">Transcription regulation</keyword>
<feature type="chain" id="PRO_0000182512" description="Heat-inducible transcription repressor HrcA">
    <location>
        <begin position="1"/>
        <end position="343"/>
    </location>
</feature>
<evidence type="ECO:0000255" key="1">
    <source>
        <dbReference type="HAMAP-Rule" id="MF_00081"/>
    </source>
</evidence>
<reference key="1">
    <citation type="journal article" date="1998" name="Nature">
        <title>Deciphering the biology of Mycobacterium tuberculosis from the complete genome sequence.</title>
        <authorList>
            <person name="Cole S.T."/>
            <person name="Brosch R."/>
            <person name="Parkhill J."/>
            <person name="Garnier T."/>
            <person name="Churcher C.M."/>
            <person name="Harris D.E."/>
            <person name="Gordon S.V."/>
            <person name="Eiglmeier K."/>
            <person name="Gas S."/>
            <person name="Barry C.E. III"/>
            <person name="Tekaia F."/>
            <person name="Badcock K."/>
            <person name="Basham D."/>
            <person name="Brown D."/>
            <person name="Chillingworth T."/>
            <person name="Connor R."/>
            <person name="Davies R.M."/>
            <person name="Devlin K."/>
            <person name="Feltwell T."/>
            <person name="Gentles S."/>
            <person name="Hamlin N."/>
            <person name="Holroyd S."/>
            <person name="Hornsby T."/>
            <person name="Jagels K."/>
            <person name="Krogh A."/>
            <person name="McLean J."/>
            <person name="Moule S."/>
            <person name="Murphy L.D."/>
            <person name="Oliver S."/>
            <person name="Osborne J."/>
            <person name="Quail M.A."/>
            <person name="Rajandream M.A."/>
            <person name="Rogers J."/>
            <person name="Rutter S."/>
            <person name="Seeger K."/>
            <person name="Skelton S."/>
            <person name="Squares S."/>
            <person name="Squares R."/>
            <person name="Sulston J.E."/>
            <person name="Taylor K."/>
            <person name="Whitehead S."/>
            <person name="Barrell B.G."/>
        </authorList>
    </citation>
    <scope>NUCLEOTIDE SEQUENCE [LARGE SCALE GENOMIC DNA]</scope>
    <source>
        <strain>ATCC 25618 / H37Rv</strain>
    </source>
</reference>
<reference key="2">
    <citation type="journal article" date="2008" name="BMC Syst. Biol.">
        <title>targetTB: a target identification pipeline for Mycobacterium tuberculosis through an interactome, reactome and genome-scale structural analysis.</title>
        <authorList>
            <person name="Raman K."/>
            <person name="Yeturu K."/>
            <person name="Chandra N."/>
        </authorList>
    </citation>
    <scope>IDENTIFICATION AS A DRUG TARGET [LARGE SCALE ANALYSIS]</scope>
</reference>
<reference key="3">
    <citation type="journal article" date="2011" name="Mol. Cell. Proteomics">
        <title>Proteogenomic analysis of Mycobacterium tuberculosis by high resolution mass spectrometry.</title>
        <authorList>
            <person name="Kelkar D.S."/>
            <person name="Kumar D."/>
            <person name="Kumar P."/>
            <person name="Balakrishnan L."/>
            <person name="Muthusamy B."/>
            <person name="Yadav A.K."/>
            <person name="Shrivastava P."/>
            <person name="Marimuthu A."/>
            <person name="Anand S."/>
            <person name="Sundaram H."/>
            <person name="Kingsbury R."/>
            <person name="Harsha H.C."/>
            <person name="Nair B."/>
            <person name="Prasad T.S."/>
            <person name="Chauhan D.S."/>
            <person name="Katoch K."/>
            <person name="Katoch V.M."/>
            <person name="Kumar P."/>
            <person name="Chaerkady R."/>
            <person name="Ramachandran S."/>
            <person name="Dash D."/>
            <person name="Pandey A."/>
        </authorList>
    </citation>
    <scope>IDENTIFICATION BY MASS SPECTROMETRY [LARGE SCALE ANALYSIS]</scope>
    <source>
        <strain>ATCC 25618 / H37Rv</strain>
    </source>
</reference>
<sequence>MGSADERRFEVLRAIVADFVATQEPIGSKSLVERHNLGVSSATVRNDMAVLEAEGYITQPHTSSGRVPTEKGYREFVDRLEDVKPLSSAERRAIQSFLESGVDLDDVLRRAVRLLAQLTRQVAVVQYPTLSTSTVRHLEVIALTPARLLMVVITDSGRVDQRIVELGDVIDDHQLAQLREILGQALEGKKLSAASVAVADLASQLGGAGGLGDAVGRAATVLLESLVEHTEERLLLGGTANLTRNAADFGGSLRSILEALEEQVVVLRLLAAQQEAGKVTVRIGHETASEQMVGTSMVSTAYGTAHTVYGGMGVVGPTRMDYPGTIASVAAVALYIGDVLGAR</sequence>
<comment type="function">
    <text evidence="1">Negative regulator of class I heat shock genes (grpE-dnaK-dnaJ and groELS operons). Prevents heat-shock induction of these operons.</text>
</comment>
<comment type="interaction">
    <interactant intactId="EBI-26358664">
        <id>P9WMK3</id>
    </interactant>
    <interactant intactId="EBI-26358631">
        <id>P71814</id>
        <label>phoP</label>
    </interactant>
    <organismsDiffer>false</organismsDiffer>
    <experiments>5</experiments>
</comment>
<comment type="miscellaneous">
    <text>Was identified as a high-confidence drug target.</text>
</comment>
<comment type="similarity">
    <text evidence="1">Belongs to the HrcA family.</text>
</comment>
<organism>
    <name type="scientific">Mycobacterium tuberculosis (strain ATCC 25618 / H37Rv)</name>
    <dbReference type="NCBI Taxonomy" id="83332"/>
    <lineage>
        <taxon>Bacteria</taxon>
        <taxon>Bacillati</taxon>
        <taxon>Actinomycetota</taxon>
        <taxon>Actinomycetes</taxon>
        <taxon>Mycobacteriales</taxon>
        <taxon>Mycobacteriaceae</taxon>
        <taxon>Mycobacterium</taxon>
        <taxon>Mycobacterium tuberculosis complex</taxon>
    </lineage>
</organism>
<name>HRCA_MYCTU</name>
<accession>P9WMK3</accession>
<accession>L0TC50</accession>
<accession>O05824</accession>
<accession>P64398</accession>
<gene>
    <name evidence="1" type="primary">hrcA</name>
    <name type="ordered locus">Rv2374c</name>
    <name type="ORF">MTCY27.06</name>
</gene>